<dbReference type="EC" id="4.2.1.33" evidence="1"/>
<dbReference type="EMBL" id="CP000949">
    <property type="protein sequence ID" value="ACA72053.1"/>
    <property type="molecule type" value="Genomic_DNA"/>
</dbReference>
<dbReference type="SMR" id="B1J530"/>
<dbReference type="STRING" id="390235.PputW619_1548"/>
<dbReference type="KEGG" id="ppw:PputW619_1548"/>
<dbReference type="eggNOG" id="COG0065">
    <property type="taxonomic scope" value="Bacteria"/>
</dbReference>
<dbReference type="HOGENOM" id="CLU_006714_3_4_6"/>
<dbReference type="OrthoDB" id="9802769at2"/>
<dbReference type="UniPathway" id="UPA00048">
    <property type="reaction ID" value="UER00071"/>
</dbReference>
<dbReference type="GO" id="GO:0003861">
    <property type="term" value="F:3-isopropylmalate dehydratase activity"/>
    <property type="evidence" value="ECO:0007669"/>
    <property type="project" value="UniProtKB-UniRule"/>
</dbReference>
<dbReference type="GO" id="GO:0051539">
    <property type="term" value="F:4 iron, 4 sulfur cluster binding"/>
    <property type="evidence" value="ECO:0007669"/>
    <property type="project" value="UniProtKB-KW"/>
</dbReference>
<dbReference type="GO" id="GO:0046872">
    <property type="term" value="F:metal ion binding"/>
    <property type="evidence" value="ECO:0007669"/>
    <property type="project" value="UniProtKB-KW"/>
</dbReference>
<dbReference type="GO" id="GO:0009098">
    <property type="term" value="P:L-leucine biosynthetic process"/>
    <property type="evidence" value="ECO:0007669"/>
    <property type="project" value="UniProtKB-UniRule"/>
</dbReference>
<dbReference type="CDD" id="cd01583">
    <property type="entry name" value="IPMI"/>
    <property type="match status" value="1"/>
</dbReference>
<dbReference type="FunFam" id="3.30.499.10:FF:000007">
    <property type="entry name" value="3-isopropylmalate dehydratase large subunit"/>
    <property type="match status" value="1"/>
</dbReference>
<dbReference type="Gene3D" id="3.30.499.10">
    <property type="entry name" value="Aconitase, domain 3"/>
    <property type="match status" value="2"/>
</dbReference>
<dbReference type="HAMAP" id="MF_01026">
    <property type="entry name" value="LeuC_type1"/>
    <property type="match status" value="1"/>
</dbReference>
<dbReference type="InterPro" id="IPR004430">
    <property type="entry name" value="3-IsopropMal_deHydase_lsu"/>
</dbReference>
<dbReference type="InterPro" id="IPR015931">
    <property type="entry name" value="Acnase/IPM_dHydase_lsu_aba_1/3"/>
</dbReference>
<dbReference type="InterPro" id="IPR001030">
    <property type="entry name" value="Acoase/IPM_deHydtase_lsu_aba"/>
</dbReference>
<dbReference type="InterPro" id="IPR018136">
    <property type="entry name" value="Aconitase_4Fe-4S_BS"/>
</dbReference>
<dbReference type="InterPro" id="IPR036008">
    <property type="entry name" value="Aconitase_4Fe-4S_dom"/>
</dbReference>
<dbReference type="InterPro" id="IPR050067">
    <property type="entry name" value="IPM_dehydratase_rel_enz"/>
</dbReference>
<dbReference type="InterPro" id="IPR033941">
    <property type="entry name" value="IPMI_cat"/>
</dbReference>
<dbReference type="NCBIfam" id="TIGR00170">
    <property type="entry name" value="leuC"/>
    <property type="match status" value="1"/>
</dbReference>
<dbReference type="NCBIfam" id="NF004016">
    <property type="entry name" value="PRK05478.1"/>
    <property type="match status" value="1"/>
</dbReference>
<dbReference type="NCBIfam" id="NF009116">
    <property type="entry name" value="PRK12466.1"/>
    <property type="match status" value="1"/>
</dbReference>
<dbReference type="PANTHER" id="PTHR43822:SF9">
    <property type="entry name" value="3-ISOPROPYLMALATE DEHYDRATASE"/>
    <property type="match status" value="1"/>
</dbReference>
<dbReference type="PANTHER" id="PTHR43822">
    <property type="entry name" value="HOMOACONITASE, MITOCHONDRIAL-RELATED"/>
    <property type="match status" value="1"/>
</dbReference>
<dbReference type="Pfam" id="PF00330">
    <property type="entry name" value="Aconitase"/>
    <property type="match status" value="1"/>
</dbReference>
<dbReference type="PRINTS" id="PR00415">
    <property type="entry name" value="ACONITASE"/>
</dbReference>
<dbReference type="SUPFAM" id="SSF53732">
    <property type="entry name" value="Aconitase iron-sulfur domain"/>
    <property type="match status" value="1"/>
</dbReference>
<dbReference type="PROSITE" id="PS00450">
    <property type="entry name" value="ACONITASE_1"/>
    <property type="match status" value="1"/>
</dbReference>
<dbReference type="PROSITE" id="PS01244">
    <property type="entry name" value="ACONITASE_2"/>
    <property type="match status" value="1"/>
</dbReference>
<keyword id="KW-0004">4Fe-4S</keyword>
<keyword id="KW-0028">Amino-acid biosynthesis</keyword>
<keyword id="KW-0100">Branched-chain amino acid biosynthesis</keyword>
<keyword id="KW-0408">Iron</keyword>
<keyword id="KW-0411">Iron-sulfur</keyword>
<keyword id="KW-0432">Leucine biosynthesis</keyword>
<keyword id="KW-0456">Lyase</keyword>
<keyword id="KW-0479">Metal-binding</keyword>
<feature type="chain" id="PRO_1000135706" description="3-isopropylmalate dehydratase large subunit">
    <location>
        <begin position="1"/>
        <end position="477"/>
    </location>
</feature>
<feature type="binding site" evidence="1">
    <location>
        <position position="352"/>
    </location>
    <ligand>
        <name>[4Fe-4S] cluster</name>
        <dbReference type="ChEBI" id="CHEBI:49883"/>
    </ligand>
</feature>
<feature type="binding site" evidence="1">
    <location>
        <position position="413"/>
    </location>
    <ligand>
        <name>[4Fe-4S] cluster</name>
        <dbReference type="ChEBI" id="CHEBI:49883"/>
    </ligand>
</feature>
<feature type="binding site" evidence="1">
    <location>
        <position position="416"/>
    </location>
    <ligand>
        <name>[4Fe-4S] cluster</name>
        <dbReference type="ChEBI" id="CHEBI:49883"/>
    </ligand>
</feature>
<organism>
    <name type="scientific">Pseudomonas putida (strain W619)</name>
    <dbReference type="NCBI Taxonomy" id="390235"/>
    <lineage>
        <taxon>Bacteria</taxon>
        <taxon>Pseudomonadati</taxon>
        <taxon>Pseudomonadota</taxon>
        <taxon>Gammaproteobacteria</taxon>
        <taxon>Pseudomonadales</taxon>
        <taxon>Pseudomonadaceae</taxon>
        <taxon>Pseudomonas</taxon>
    </lineage>
</organism>
<gene>
    <name evidence="1" type="primary">leuC</name>
    <name type="ordered locus">PputW619_1548</name>
</gene>
<sequence length="477" mass="51287">MAGKTLYDKLWEAHEVKRRDDGSSLIYIDRHIIHEVTSPQAFEGLRLANRKPWRIDANIATPDHNVPTTPERKGGIEAIVDQVSRLQVQTLDENCDEYGIVEFKMNDVRQGIVHVISPEQGATLPGMTVVCGDSHTSTHGAFGALAHGIGTSEVEHVLATQCLVAKKMKNMLVRVEGTLPAGVTAKDIVLAVIGKIGTAGGNGHAMEFAGSAIRELSMEGRMTICNMSIEAGARVGLVATDATTIAYVEGRPYAPKGEQWERAVEAWKDLVSDDDAVFDTVVELDAAQIKPQVSWGTSPEMVLAVDQRVPDPAAEADLVKRGSIERALKYMGLRANQAITDIHLDRVFIGSCTNSRIEDLRAAAEIAKGRKVAATVKQAIVVPGSGLVKAQAEREGLDKIFLEAGFEWREPGCSMCLAMNPDRLESGEHCASTSNRNFEGRQGAGGRTHLVSPAMAAAAAVTGHFIDVRELIQGSAA</sequence>
<reference key="1">
    <citation type="submission" date="2008-02" db="EMBL/GenBank/DDBJ databases">
        <title>Complete sequence of Pseudomonas putida W619.</title>
        <authorList>
            <person name="Copeland A."/>
            <person name="Lucas S."/>
            <person name="Lapidus A."/>
            <person name="Barry K."/>
            <person name="Detter J.C."/>
            <person name="Glavina del Rio T."/>
            <person name="Dalin E."/>
            <person name="Tice H."/>
            <person name="Pitluck S."/>
            <person name="Chain P."/>
            <person name="Malfatti S."/>
            <person name="Shin M."/>
            <person name="Vergez L."/>
            <person name="Schmutz J."/>
            <person name="Larimer F."/>
            <person name="Land M."/>
            <person name="Hauser L."/>
            <person name="Kyrpides N."/>
            <person name="Kim E."/>
            <person name="Taghavi S."/>
            <person name="Vangronsveld D."/>
            <person name="van der Lelie D."/>
            <person name="Richardson P."/>
        </authorList>
    </citation>
    <scope>NUCLEOTIDE SEQUENCE [LARGE SCALE GENOMIC DNA]</scope>
    <source>
        <strain>W619</strain>
    </source>
</reference>
<protein>
    <recommendedName>
        <fullName evidence="1">3-isopropylmalate dehydratase large subunit</fullName>
        <ecNumber evidence="1">4.2.1.33</ecNumber>
    </recommendedName>
    <alternativeName>
        <fullName evidence="1">Alpha-IPM isomerase</fullName>
        <shortName evidence="1">IPMI</shortName>
    </alternativeName>
    <alternativeName>
        <fullName evidence="1">Isopropylmalate isomerase</fullName>
    </alternativeName>
</protein>
<comment type="function">
    <text evidence="1">Catalyzes the isomerization between 2-isopropylmalate and 3-isopropylmalate, via the formation of 2-isopropylmaleate.</text>
</comment>
<comment type="catalytic activity">
    <reaction evidence="1">
        <text>(2R,3S)-3-isopropylmalate = (2S)-2-isopropylmalate</text>
        <dbReference type="Rhea" id="RHEA:32287"/>
        <dbReference type="ChEBI" id="CHEBI:1178"/>
        <dbReference type="ChEBI" id="CHEBI:35121"/>
        <dbReference type="EC" id="4.2.1.33"/>
    </reaction>
</comment>
<comment type="cofactor">
    <cofactor evidence="1">
        <name>[4Fe-4S] cluster</name>
        <dbReference type="ChEBI" id="CHEBI:49883"/>
    </cofactor>
    <text evidence="1">Binds 1 [4Fe-4S] cluster per subunit.</text>
</comment>
<comment type="pathway">
    <text evidence="1">Amino-acid biosynthesis; L-leucine biosynthesis; L-leucine from 3-methyl-2-oxobutanoate: step 2/4.</text>
</comment>
<comment type="subunit">
    <text evidence="1">Heterodimer of LeuC and LeuD.</text>
</comment>
<comment type="similarity">
    <text evidence="1">Belongs to the aconitase/IPM isomerase family. LeuC type 1 subfamily.</text>
</comment>
<proteinExistence type="inferred from homology"/>
<accession>B1J530</accession>
<name>LEUC_PSEPW</name>
<evidence type="ECO:0000255" key="1">
    <source>
        <dbReference type="HAMAP-Rule" id="MF_01026"/>
    </source>
</evidence>